<accession>B7L8K7</accession>
<evidence type="ECO:0000255" key="1">
    <source>
        <dbReference type="HAMAP-Rule" id="MF_00517"/>
    </source>
</evidence>
<sequence>MTTNTVSRKVAWLRVVTLAVAAFIFNTTEFVPVGLLSDIAQSFHMQTAQVGIMLTIYAWVVALMSLPFMLMTSQVERRKLLICLFVVFIASHVLSFLSWSFTVLVISRIGVAFAHAIFWSITASLAIRMAPAGKRAQALSLIATGTALAMVLGLPLGRIVGQYFGWRMTFFAIGIGALITLLCLIKLLPLLPSEHSGSLKSLPLLFRRPALMSIYLLTVVVVTAHYTAYSYIEPFVQNIAGFSANFATALLLLLGGAGIIGSVIFGKLGNQYASALVSTAIALLLVCLALLLPAANSEIHLGVLSIFWGIAMMIIGLGMQVKVLALAPDATDVAMALFSGIFNIGIGAGALVGNQVSLHWSMSMIGYVGAVPAFAALIWSIIIFRRWPVTLEEQTQ</sequence>
<protein>
    <recommendedName>
        <fullName evidence="1">Probable sugar efflux transporter</fullName>
    </recommendedName>
</protein>
<reference key="1">
    <citation type="journal article" date="2009" name="PLoS Genet.">
        <title>Organised genome dynamics in the Escherichia coli species results in highly diverse adaptive paths.</title>
        <authorList>
            <person name="Touchon M."/>
            <person name="Hoede C."/>
            <person name="Tenaillon O."/>
            <person name="Barbe V."/>
            <person name="Baeriswyl S."/>
            <person name="Bidet P."/>
            <person name="Bingen E."/>
            <person name="Bonacorsi S."/>
            <person name="Bouchier C."/>
            <person name="Bouvet O."/>
            <person name="Calteau A."/>
            <person name="Chiapello H."/>
            <person name="Clermont O."/>
            <person name="Cruveiller S."/>
            <person name="Danchin A."/>
            <person name="Diard M."/>
            <person name="Dossat C."/>
            <person name="Karoui M.E."/>
            <person name="Frapy E."/>
            <person name="Garry L."/>
            <person name="Ghigo J.M."/>
            <person name="Gilles A.M."/>
            <person name="Johnson J."/>
            <person name="Le Bouguenec C."/>
            <person name="Lescat M."/>
            <person name="Mangenot S."/>
            <person name="Martinez-Jehanne V."/>
            <person name="Matic I."/>
            <person name="Nassif X."/>
            <person name="Oztas S."/>
            <person name="Petit M.A."/>
            <person name="Pichon C."/>
            <person name="Rouy Z."/>
            <person name="Ruf C.S."/>
            <person name="Schneider D."/>
            <person name="Tourret J."/>
            <person name="Vacherie B."/>
            <person name="Vallenet D."/>
            <person name="Medigue C."/>
            <person name="Rocha E.P.C."/>
            <person name="Denamur E."/>
        </authorList>
    </citation>
    <scope>NUCLEOTIDE SEQUENCE [LARGE SCALE GENOMIC DNA]</scope>
    <source>
        <strain>55989 / EAEC</strain>
    </source>
</reference>
<dbReference type="EMBL" id="CU928145">
    <property type="protein sequence ID" value="CAU97516.1"/>
    <property type="molecule type" value="Genomic_DNA"/>
</dbReference>
<dbReference type="SMR" id="B7L8K7"/>
<dbReference type="KEGG" id="eck:EC55989_1663"/>
<dbReference type="HOGENOM" id="CLU_001265_61_1_6"/>
<dbReference type="Proteomes" id="UP000000746">
    <property type="component" value="Chromosome"/>
</dbReference>
<dbReference type="GO" id="GO:0005886">
    <property type="term" value="C:plasma membrane"/>
    <property type="evidence" value="ECO:0007669"/>
    <property type="project" value="UniProtKB-SubCell"/>
</dbReference>
<dbReference type="GO" id="GO:0015144">
    <property type="term" value="F:carbohydrate transmembrane transporter activity"/>
    <property type="evidence" value="ECO:0007669"/>
    <property type="project" value="UniProtKB-UniRule"/>
</dbReference>
<dbReference type="CDD" id="cd17324">
    <property type="entry name" value="MFS_NepI_like"/>
    <property type="match status" value="1"/>
</dbReference>
<dbReference type="FunFam" id="1.20.1250.20:FF:000079">
    <property type="entry name" value="Probable sugar efflux transporter"/>
    <property type="match status" value="1"/>
</dbReference>
<dbReference type="Gene3D" id="1.20.1250.20">
    <property type="entry name" value="MFS general substrate transporter like domains"/>
    <property type="match status" value="1"/>
</dbReference>
<dbReference type="HAMAP" id="MF_00517">
    <property type="entry name" value="MFS_SotB"/>
    <property type="match status" value="1"/>
</dbReference>
<dbReference type="InterPro" id="IPR011701">
    <property type="entry name" value="MFS"/>
</dbReference>
<dbReference type="InterPro" id="IPR020846">
    <property type="entry name" value="MFS_dom"/>
</dbReference>
<dbReference type="InterPro" id="IPR050189">
    <property type="entry name" value="MFS_Efflux_Transporters"/>
</dbReference>
<dbReference type="InterPro" id="IPR036259">
    <property type="entry name" value="MFS_trans_sf"/>
</dbReference>
<dbReference type="InterPro" id="IPR023495">
    <property type="entry name" value="Sugar_effux_transptr_put"/>
</dbReference>
<dbReference type="NCBIfam" id="NF002921">
    <property type="entry name" value="PRK03545.1"/>
    <property type="match status" value="1"/>
</dbReference>
<dbReference type="PANTHER" id="PTHR43124">
    <property type="entry name" value="PURINE EFFLUX PUMP PBUE"/>
    <property type="match status" value="1"/>
</dbReference>
<dbReference type="PANTHER" id="PTHR43124:SF4">
    <property type="entry name" value="SUGAR EFFLUX TRANSPORTER"/>
    <property type="match status" value="1"/>
</dbReference>
<dbReference type="Pfam" id="PF07690">
    <property type="entry name" value="MFS_1"/>
    <property type="match status" value="1"/>
</dbReference>
<dbReference type="SUPFAM" id="SSF103473">
    <property type="entry name" value="MFS general substrate transporter"/>
    <property type="match status" value="1"/>
</dbReference>
<dbReference type="PROSITE" id="PS50850">
    <property type="entry name" value="MFS"/>
    <property type="match status" value="1"/>
</dbReference>
<keyword id="KW-0997">Cell inner membrane</keyword>
<keyword id="KW-1003">Cell membrane</keyword>
<keyword id="KW-0472">Membrane</keyword>
<keyword id="KW-1185">Reference proteome</keyword>
<keyword id="KW-0762">Sugar transport</keyword>
<keyword id="KW-0812">Transmembrane</keyword>
<keyword id="KW-1133">Transmembrane helix</keyword>
<keyword id="KW-0813">Transport</keyword>
<name>SOTB_ECO55</name>
<organism>
    <name type="scientific">Escherichia coli (strain 55989 / EAEC)</name>
    <dbReference type="NCBI Taxonomy" id="585055"/>
    <lineage>
        <taxon>Bacteria</taxon>
        <taxon>Pseudomonadati</taxon>
        <taxon>Pseudomonadota</taxon>
        <taxon>Gammaproteobacteria</taxon>
        <taxon>Enterobacterales</taxon>
        <taxon>Enterobacteriaceae</taxon>
        <taxon>Escherichia</taxon>
    </lineage>
</organism>
<proteinExistence type="inferred from homology"/>
<gene>
    <name evidence="1" type="primary">sotB</name>
    <name type="ordered locus">EC55989_1663</name>
</gene>
<feature type="chain" id="PRO_1000197456" description="Probable sugar efflux transporter">
    <location>
        <begin position="1"/>
        <end position="396"/>
    </location>
</feature>
<feature type="transmembrane region" description="Helical" evidence="1">
    <location>
        <begin position="15"/>
        <end position="35"/>
    </location>
</feature>
<feature type="transmembrane region" description="Helical" evidence="1">
    <location>
        <begin position="50"/>
        <end position="70"/>
    </location>
</feature>
<feature type="transmembrane region" description="Helical" evidence="1">
    <location>
        <begin position="81"/>
        <end position="101"/>
    </location>
</feature>
<feature type="transmembrane region" description="Helical" evidence="1">
    <location>
        <begin position="103"/>
        <end position="123"/>
    </location>
</feature>
<feature type="transmembrane region" description="Helical" evidence="1">
    <location>
        <begin position="136"/>
        <end position="156"/>
    </location>
</feature>
<feature type="transmembrane region" description="Helical" evidence="1">
    <location>
        <begin position="170"/>
        <end position="190"/>
    </location>
</feature>
<feature type="transmembrane region" description="Helical" evidence="1">
    <location>
        <begin position="209"/>
        <end position="229"/>
    </location>
</feature>
<feature type="transmembrane region" description="Helical" evidence="1">
    <location>
        <begin position="246"/>
        <end position="266"/>
    </location>
</feature>
<feature type="transmembrane region" description="Helical" evidence="1">
    <location>
        <begin position="275"/>
        <end position="295"/>
    </location>
</feature>
<feature type="transmembrane region" description="Helical" evidence="1">
    <location>
        <begin position="299"/>
        <end position="319"/>
    </location>
</feature>
<feature type="transmembrane region" description="Helical" evidence="1">
    <location>
        <begin position="333"/>
        <end position="353"/>
    </location>
</feature>
<feature type="transmembrane region" description="Helical" evidence="1">
    <location>
        <begin position="364"/>
        <end position="384"/>
    </location>
</feature>
<comment type="function">
    <text evidence="1">Involved in the efflux of sugars. The physiological role may be the reduction of the intracellular concentration of toxic sugars or sugar metabolites.</text>
</comment>
<comment type="subcellular location">
    <subcellularLocation>
        <location evidence="1">Cell inner membrane</location>
        <topology evidence="1">Multi-pass membrane protein</topology>
    </subcellularLocation>
</comment>
<comment type="similarity">
    <text evidence="1">Belongs to the major facilitator superfamily. SotB (TC 2.A.1.2) family.</text>
</comment>